<proteinExistence type="inferred from homology"/>
<sequence length="89" mass="10094">MSITAERKTALIAEHARTEGDTGSAEVQVAILSERIANLTEHFKTHKKDNHSRRGLLMMVSQRRSLLDHLKKSDLGRYSALIEKLGLRR</sequence>
<evidence type="ECO:0000255" key="1">
    <source>
        <dbReference type="HAMAP-Rule" id="MF_01343"/>
    </source>
</evidence>
<evidence type="ECO:0000305" key="2"/>
<comment type="function">
    <text evidence="1">One of the primary rRNA binding proteins, it binds directly to 16S rRNA where it helps nucleate assembly of the platform of the 30S subunit by binding and bridging several RNA helices of the 16S rRNA.</text>
</comment>
<comment type="function">
    <text evidence="1">Forms an intersubunit bridge (bridge B4) with the 23S rRNA of the 50S subunit in the ribosome.</text>
</comment>
<comment type="subunit">
    <text evidence="1">Part of the 30S ribosomal subunit. Forms a bridge to the 50S subunit in the 70S ribosome, contacting the 23S rRNA.</text>
</comment>
<comment type="similarity">
    <text evidence="1">Belongs to the universal ribosomal protein uS15 family.</text>
</comment>
<protein>
    <recommendedName>
        <fullName evidence="1">Small ribosomal subunit protein uS15</fullName>
    </recommendedName>
    <alternativeName>
        <fullName evidence="2">30S ribosomal protein S15</fullName>
    </alternativeName>
</protein>
<reference key="1">
    <citation type="submission" date="2008-01" db="EMBL/GenBank/DDBJ databases">
        <title>Complete sequence of chromosome of Caulobacter sp. K31.</title>
        <authorList>
            <consortium name="US DOE Joint Genome Institute"/>
            <person name="Copeland A."/>
            <person name="Lucas S."/>
            <person name="Lapidus A."/>
            <person name="Barry K."/>
            <person name="Glavina del Rio T."/>
            <person name="Dalin E."/>
            <person name="Tice H."/>
            <person name="Pitluck S."/>
            <person name="Bruce D."/>
            <person name="Goodwin L."/>
            <person name="Thompson L.S."/>
            <person name="Brettin T."/>
            <person name="Detter J.C."/>
            <person name="Han C."/>
            <person name="Schmutz J."/>
            <person name="Larimer F."/>
            <person name="Land M."/>
            <person name="Hauser L."/>
            <person name="Kyrpides N."/>
            <person name="Kim E."/>
            <person name="Stephens C."/>
            <person name="Richardson P."/>
        </authorList>
    </citation>
    <scope>NUCLEOTIDE SEQUENCE [LARGE SCALE GENOMIC DNA]</scope>
    <source>
        <strain>K31</strain>
    </source>
</reference>
<feature type="chain" id="PRO_1000086793" description="Small ribosomal subunit protein uS15">
    <location>
        <begin position="1"/>
        <end position="89"/>
    </location>
</feature>
<name>RS15_CAUSK</name>
<dbReference type="EMBL" id="CP000927">
    <property type="protein sequence ID" value="ABZ69178.1"/>
    <property type="molecule type" value="Genomic_DNA"/>
</dbReference>
<dbReference type="SMR" id="B0T174"/>
<dbReference type="STRING" id="366602.Caul_0040"/>
<dbReference type="KEGG" id="cak:Caul_0040"/>
<dbReference type="eggNOG" id="COG0184">
    <property type="taxonomic scope" value="Bacteria"/>
</dbReference>
<dbReference type="HOGENOM" id="CLU_148518_0_0_5"/>
<dbReference type="OrthoDB" id="9799262at2"/>
<dbReference type="GO" id="GO:0022627">
    <property type="term" value="C:cytosolic small ribosomal subunit"/>
    <property type="evidence" value="ECO:0007669"/>
    <property type="project" value="TreeGrafter"/>
</dbReference>
<dbReference type="GO" id="GO:0019843">
    <property type="term" value="F:rRNA binding"/>
    <property type="evidence" value="ECO:0007669"/>
    <property type="project" value="UniProtKB-UniRule"/>
</dbReference>
<dbReference type="GO" id="GO:0003735">
    <property type="term" value="F:structural constituent of ribosome"/>
    <property type="evidence" value="ECO:0007669"/>
    <property type="project" value="InterPro"/>
</dbReference>
<dbReference type="GO" id="GO:0006412">
    <property type="term" value="P:translation"/>
    <property type="evidence" value="ECO:0007669"/>
    <property type="project" value="UniProtKB-UniRule"/>
</dbReference>
<dbReference type="CDD" id="cd00353">
    <property type="entry name" value="Ribosomal_S15p_S13e"/>
    <property type="match status" value="1"/>
</dbReference>
<dbReference type="FunFam" id="1.10.287.10:FF:000002">
    <property type="entry name" value="30S ribosomal protein S15"/>
    <property type="match status" value="1"/>
</dbReference>
<dbReference type="Gene3D" id="6.10.250.3130">
    <property type="match status" value="1"/>
</dbReference>
<dbReference type="Gene3D" id="1.10.287.10">
    <property type="entry name" value="S15/NS1, RNA-binding"/>
    <property type="match status" value="1"/>
</dbReference>
<dbReference type="HAMAP" id="MF_01343_B">
    <property type="entry name" value="Ribosomal_uS15_B"/>
    <property type="match status" value="1"/>
</dbReference>
<dbReference type="InterPro" id="IPR000589">
    <property type="entry name" value="Ribosomal_uS15"/>
</dbReference>
<dbReference type="InterPro" id="IPR005290">
    <property type="entry name" value="Ribosomal_uS15_bac-type"/>
</dbReference>
<dbReference type="InterPro" id="IPR009068">
    <property type="entry name" value="uS15_NS1_RNA-bd_sf"/>
</dbReference>
<dbReference type="NCBIfam" id="TIGR00952">
    <property type="entry name" value="S15_bact"/>
    <property type="match status" value="1"/>
</dbReference>
<dbReference type="PANTHER" id="PTHR23321">
    <property type="entry name" value="RIBOSOMAL PROTEIN S15, BACTERIAL AND ORGANELLAR"/>
    <property type="match status" value="1"/>
</dbReference>
<dbReference type="PANTHER" id="PTHR23321:SF26">
    <property type="entry name" value="SMALL RIBOSOMAL SUBUNIT PROTEIN US15M"/>
    <property type="match status" value="1"/>
</dbReference>
<dbReference type="Pfam" id="PF00312">
    <property type="entry name" value="Ribosomal_S15"/>
    <property type="match status" value="1"/>
</dbReference>
<dbReference type="SMART" id="SM01387">
    <property type="entry name" value="Ribosomal_S15"/>
    <property type="match status" value="1"/>
</dbReference>
<dbReference type="SUPFAM" id="SSF47060">
    <property type="entry name" value="S15/NS1 RNA-binding domain"/>
    <property type="match status" value="1"/>
</dbReference>
<gene>
    <name evidence="1" type="primary">rpsO</name>
    <name type="ordered locus">Caul_0040</name>
</gene>
<accession>B0T174</accession>
<keyword id="KW-0687">Ribonucleoprotein</keyword>
<keyword id="KW-0689">Ribosomal protein</keyword>
<keyword id="KW-0694">RNA-binding</keyword>
<keyword id="KW-0699">rRNA-binding</keyword>
<organism>
    <name type="scientific">Caulobacter sp. (strain K31)</name>
    <dbReference type="NCBI Taxonomy" id="366602"/>
    <lineage>
        <taxon>Bacteria</taxon>
        <taxon>Pseudomonadati</taxon>
        <taxon>Pseudomonadota</taxon>
        <taxon>Alphaproteobacteria</taxon>
        <taxon>Caulobacterales</taxon>
        <taxon>Caulobacteraceae</taxon>
        <taxon>Caulobacter</taxon>
    </lineage>
</organism>